<protein>
    <recommendedName>
        <fullName>Forkhead box protein L1</fullName>
    </recommendedName>
    <alternativeName>
        <fullName>Forkhead-related protein FKHL11</fullName>
    </alternativeName>
    <alternativeName>
        <fullName>Transcription factor FKH-6</fullName>
    </alternativeName>
</protein>
<reference key="1">
    <citation type="journal article" date="1996" name="Development">
        <title>Clustered arrangement of winged helix genes fkh-6 and MFH-1: possible implications for mesoderm development.</title>
        <authorList>
            <person name="Kaestner K.H."/>
            <person name="Bleckmann S.C."/>
            <person name="Monaghan A.P."/>
            <person name="Schlondorff J."/>
            <person name="Mincheva A."/>
            <person name="Lichter P."/>
            <person name="Schuetz G."/>
        </authorList>
    </citation>
    <scope>NUCLEOTIDE SEQUENCE [GENOMIC DNA]</scope>
    <source>
        <strain>129</strain>
    </source>
</reference>
<reference key="2">
    <citation type="submission" date="2005-07" db="EMBL/GenBank/DDBJ databases">
        <authorList>
            <person name="Mural R.J."/>
            <person name="Adams M.D."/>
            <person name="Myers E.W."/>
            <person name="Smith H.O."/>
            <person name="Venter J.C."/>
        </authorList>
    </citation>
    <scope>NUCLEOTIDE SEQUENCE [LARGE SCALE GENOMIC DNA]</scope>
</reference>
<reference key="3">
    <citation type="journal article" date="2004" name="Genome Res.">
        <title>The status, quality, and expansion of the NIH full-length cDNA project: the Mammalian Gene Collection (MGC).</title>
        <authorList>
            <consortium name="The MGC Project Team"/>
        </authorList>
    </citation>
    <scope>NUCLEOTIDE SEQUENCE [LARGE SCALE MRNA]</scope>
    <source>
        <tissue>Brain</tissue>
    </source>
</reference>
<reference key="4">
    <citation type="journal article" date="1993" name="Proc. Natl. Acad. Sci. U.S.A.">
        <title>Six members of the mouse forkhead gene family are developmentally regulated.</title>
        <authorList>
            <person name="Kaestner K.H."/>
            <person name="Lee K.H."/>
            <person name="Schloendorff J."/>
            <person name="Hiemisch H."/>
            <person name="Monaghan A.P."/>
            <person name="Schuetz G."/>
        </authorList>
    </citation>
    <scope>NUCLEOTIDE SEQUENCE [GENOMIC DNA] OF 40-150</scope>
    <source>
        <strain>129</strain>
    </source>
</reference>
<reference key="5">
    <citation type="journal article" date="1997" name="Genes Dev.">
        <title>The mesenchymal winged helix transcription factor Fkh6 is required for the control of gastrointestinal proliferation and differentiation.</title>
        <authorList>
            <person name="Kaestner K.H."/>
            <person name="Silberg D.G."/>
            <person name="Traber P.G."/>
            <person name="Schutz G."/>
        </authorList>
    </citation>
    <scope>DISRUPTION PHENOTYPE</scope>
    <scope>FUNCTION</scope>
</reference>
<reference key="6">
    <citation type="journal article" date="2004" name="Am. J. Physiol.">
        <title>Foxl1 null mice have abnormal intestinal epithelia, postnatal growth retardation, and defective intestinal glucose uptake.</title>
        <authorList>
            <person name="Katz J.P."/>
            <person name="Perreault N."/>
            <person name="Goldstein B.G."/>
            <person name="Chao H.H."/>
            <person name="Ferraris R.P."/>
            <person name="Kaestner K.H."/>
        </authorList>
    </citation>
    <scope>DISRUPTION PHENOTYPE</scope>
</reference>
<reference key="7">
    <citation type="journal article" date="2009" name="J. Biol. Chem.">
        <title>FoxF1 and FoxL1 link hedgehog signaling and the control of epithelial proliferation in the developing stomach and intestine.</title>
        <authorList>
            <person name="Madison B.B."/>
            <person name="McKenna L.B."/>
            <person name="Dolson D."/>
            <person name="Epstein D.J."/>
            <person name="Kaestner K.H."/>
        </authorList>
    </citation>
    <scope>FUNCTION</scope>
</reference>
<proteinExistence type="evidence at transcript level"/>
<feature type="chain" id="PRO_0000091860" description="Forkhead box protein L1">
    <location>
        <begin position="1"/>
        <end position="336"/>
    </location>
</feature>
<feature type="DNA-binding region" description="Fork-head" evidence="2">
    <location>
        <begin position="48"/>
        <end position="139"/>
    </location>
</feature>
<feature type="region of interest" description="Disordered" evidence="3">
    <location>
        <begin position="140"/>
        <end position="214"/>
    </location>
</feature>
<feature type="region of interest" description="Disordered" evidence="3">
    <location>
        <begin position="227"/>
        <end position="252"/>
    </location>
</feature>
<feature type="compositionally biased region" description="Low complexity" evidence="3">
    <location>
        <begin position="242"/>
        <end position="252"/>
    </location>
</feature>
<feature type="sequence conflict" description="In Ref. 2; CAA50746/CAA63243." evidence="7" ref="2">
    <original>L</original>
    <variation>LV</variation>
    <location>
        <position position="175"/>
    </location>
</feature>
<organism>
    <name type="scientific">Mus musculus</name>
    <name type="common">Mouse</name>
    <dbReference type="NCBI Taxonomy" id="10090"/>
    <lineage>
        <taxon>Eukaryota</taxon>
        <taxon>Metazoa</taxon>
        <taxon>Chordata</taxon>
        <taxon>Craniata</taxon>
        <taxon>Vertebrata</taxon>
        <taxon>Euteleostomi</taxon>
        <taxon>Mammalia</taxon>
        <taxon>Eutheria</taxon>
        <taxon>Euarchontoglires</taxon>
        <taxon>Glires</taxon>
        <taxon>Rodentia</taxon>
        <taxon>Myomorpha</taxon>
        <taxon>Muroidea</taxon>
        <taxon>Muridae</taxon>
        <taxon>Murinae</taxon>
        <taxon>Mus</taxon>
        <taxon>Mus</taxon>
    </lineage>
</organism>
<name>FOXL1_MOUSE</name>
<comment type="function">
    <text evidence="5 6">Transcription factor required for proper proliferation and differentiation in the gastrointestinal epithelium. Target gene of the hedgehog (Hh) signaling pathway via GLI2 and GLI3 transcription factors.</text>
</comment>
<comment type="subcellular location">
    <subcellularLocation>
        <location evidence="1">Nucleus</location>
    </subcellularLocation>
</comment>
<comment type="disruption phenotype">
    <text evidence="4 6">Deficient mice show postnatal growth retardation secondary to severe structural abnormalities of the stomach, duodenum, jejunum and decreased intestinal uptake of D-glucose and levels of the intestinal D-glucose transporter Slc5a1.</text>
</comment>
<comment type="sequence caution" evidence="7">
    <conflict type="frameshift">
        <sequence resource="EMBL-CDS" id="CAA63243"/>
    </conflict>
</comment>
<sequence length="336" mass="35793">MSHLFSPPLAALAASPLLYVYSPERPGLPLAFAPAAALAGPGRVEPPQKPPYSYIALIAMAIQDAPEQRVTLNGIYQFIMDRFPFYHDNRQGWQNSIRHNLSLNECFVKVPREKGRPGKGSYWTLDPRCLDMFENGNYRRRKRKPKPAAGSPEAKRTRVEPPESEVGCDVGSPDLATALPTRAPDRSQSPAVGTARPALLPWPGPEPRDPDADLTVQGAGAVASGQLQRPAHHLGSPLCPAPSGSPKGSKSKSFSIDSILAVRPTPASGAEAPGIPKPVPGALGSSLLAASSGLAPPFNASLVFDAHVQGGFSQLGIPFLSYFPLQVPEATVLRFH</sequence>
<gene>
    <name type="primary">Foxl1</name>
    <name type="synonym">Fkh6</name>
    <name type="synonym">Fkhl11</name>
</gene>
<keyword id="KW-0238">DNA-binding</keyword>
<keyword id="KW-0539">Nucleus</keyword>
<keyword id="KW-1185">Reference proteome</keyword>
<keyword id="KW-0804">Transcription</keyword>
<keyword id="KW-0805">Transcription regulation</keyword>
<accession>Q64731</accession>
<accession>B2RQ86</accession>
<dbReference type="EMBL" id="X92498">
    <property type="protein sequence ID" value="CAA63243.1"/>
    <property type="status" value="ALT_FRAME"/>
    <property type="molecule type" value="Genomic_DNA"/>
</dbReference>
<dbReference type="EMBL" id="CH466525">
    <property type="protein sequence ID" value="EDL11654.1"/>
    <property type="molecule type" value="Genomic_DNA"/>
</dbReference>
<dbReference type="EMBL" id="BC137805">
    <property type="protein sequence ID" value="AAI37806.1"/>
    <property type="molecule type" value="mRNA"/>
</dbReference>
<dbReference type="EMBL" id="BC137806">
    <property type="protein sequence ID" value="AAI37807.1"/>
    <property type="molecule type" value="mRNA"/>
</dbReference>
<dbReference type="EMBL" id="X71944">
    <property type="protein sequence ID" value="CAA50746.1"/>
    <property type="molecule type" value="Genomic_DNA"/>
</dbReference>
<dbReference type="CCDS" id="CCDS59744.1"/>
<dbReference type="PIR" id="F47746">
    <property type="entry name" value="F47746"/>
</dbReference>
<dbReference type="RefSeq" id="NP_032050.2">
    <property type="nucleotide sequence ID" value="NM_008024.3"/>
</dbReference>
<dbReference type="SMR" id="Q64731"/>
<dbReference type="BioGRID" id="199698">
    <property type="interactions" value="1"/>
</dbReference>
<dbReference type="FunCoup" id="Q64731">
    <property type="interactions" value="15"/>
</dbReference>
<dbReference type="IntAct" id="Q64731">
    <property type="interactions" value="1"/>
</dbReference>
<dbReference type="STRING" id="10090.ENSMUSP00000137732"/>
<dbReference type="GlyGen" id="Q64731">
    <property type="glycosylation" value="1 site"/>
</dbReference>
<dbReference type="iPTMnet" id="Q64731"/>
<dbReference type="PhosphoSitePlus" id="Q64731"/>
<dbReference type="PaxDb" id="10090-ENSMUSP00000137732"/>
<dbReference type="ProteomicsDB" id="271593"/>
<dbReference type="Antibodypedia" id="17198">
    <property type="antibodies" value="469 antibodies from 28 providers"/>
</dbReference>
<dbReference type="DNASU" id="14241"/>
<dbReference type="Ensembl" id="ENSMUST00000181609.2">
    <property type="protein sequence ID" value="ENSMUSP00000137732.2"/>
    <property type="gene ID" value="ENSMUSG00000097084.2"/>
</dbReference>
<dbReference type="GeneID" id="14241"/>
<dbReference type="KEGG" id="mmu:14241"/>
<dbReference type="UCSC" id="uc009nrs.1">
    <property type="organism name" value="mouse"/>
</dbReference>
<dbReference type="AGR" id="MGI:1347469"/>
<dbReference type="CTD" id="2300"/>
<dbReference type="MGI" id="MGI:1347469">
    <property type="gene designation" value="Foxl1"/>
</dbReference>
<dbReference type="VEuPathDB" id="HostDB:ENSMUSG00000097084"/>
<dbReference type="eggNOG" id="KOG2294">
    <property type="taxonomic scope" value="Eukaryota"/>
</dbReference>
<dbReference type="GeneTree" id="ENSGT00940000162251"/>
<dbReference type="HOGENOM" id="CLU_052451_0_0_1"/>
<dbReference type="InParanoid" id="Q64731"/>
<dbReference type="OMA" id="SCFPLHF"/>
<dbReference type="OrthoDB" id="5954824at2759"/>
<dbReference type="PhylomeDB" id="Q64731"/>
<dbReference type="BioGRID-ORCS" id="14241">
    <property type="hits" value="3 hits in 77 CRISPR screens"/>
</dbReference>
<dbReference type="PRO" id="PR:Q64731"/>
<dbReference type="Proteomes" id="UP000000589">
    <property type="component" value="Chromosome 8"/>
</dbReference>
<dbReference type="RNAct" id="Q64731">
    <property type="molecule type" value="protein"/>
</dbReference>
<dbReference type="Bgee" id="ENSMUSG00000097084">
    <property type="expression patterns" value="Expressed in female urethra and 67 other cell types or tissues"/>
</dbReference>
<dbReference type="GO" id="GO:0005634">
    <property type="term" value="C:nucleus"/>
    <property type="evidence" value="ECO:0007669"/>
    <property type="project" value="UniProtKB-SubCell"/>
</dbReference>
<dbReference type="GO" id="GO:0003677">
    <property type="term" value="F:DNA binding"/>
    <property type="evidence" value="ECO:0000266"/>
    <property type="project" value="MGI"/>
</dbReference>
<dbReference type="GO" id="GO:0003700">
    <property type="term" value="F:DNA-binding transcription factor activity"/>
    <property type="evidence" value="ECO:0000314"/>
    <property type="project" value="UniProtKB"/>
</dbReference>
<dbReference type="GO" id="GO:0043565">
    <property type="term" value="F:sequence-specific DNA binding"/>
    <property type="evidence" value="ECO:0007669"/>
    <property type="project" value="Ensembl"/>
</dbReference>
<dbReference type="GO" id="GO:0007507">
    <property type="term" value="P:heart development"/>
    <property type="evidence" value="ECO:0007669"/>
    <property type="project" value="Ensembl"/>
</dbReference>
<dbReference type="GO" id="GO:0061146">
    <property type="term" value="P:Peyer's patch morphogenesis"/>
    <property type="evidence" value="ECO:0000315"/>
    <property type="project" value="MGI"/>
</dbReference>
<dbReference type="GO" id="GO:0030166">
    <property type="term" value="P:proteoglycan biosynthetic process"/>
    <property type="evidence" value="ECO:0000315"/>
    <property type="project" value="MGI"/>
</dbReference>
<dbReference type="GO" id="GO:0006355">
    <property type="term" value="P:regulation of DNA-templated transcription"/>
    <property type="evidence" value="ECO:0000304"/>
    <property type="project" value="MGI"/>
</dbReference>
<dbReference type="GO" id="GO:0030111">
    <property type="term" value="P:regulation of Wnt signaling pathway"/>
    <property type="evidence" value="ECO:0000315"/>
    <property type="project" value="MGI"/>
</dbReference>
<dbReference type="GO" id="GO:0007495">
    <property type="term" value="P:visceral mesoderm-endoderm interaction involved in midgut development"/>
    <property type="evidence" value="ECO:0000315"/>
    <property type="project" value="MGI"/>
</dbReference>
<dbReference type="CDD" id="cd20027">
    <property type="entry name" value="FH_FOXL1"/>
    <property type="match status" value="1"/>
</dbReference>
<dbReference type="FunFam" id="1.10.10.10:FF:000016">
    <property type="entry name" value="Forkhead box protein I1"/>
    <property type="match status" value="1"/>
</dbReference>
<dbReference type="Gene3D" id="1.10.10.10">
    <property type="entry name" value="Winged helix-like DNA-binding domain superfamily/Winged helix DNA-binding domain"/>
    <property type="match status" value="1"/>
</dbReference>
<dbReference type="InterPro" id="IPR047514">
    <property type="entry name" value="FH_FOXL1"/>
</dbReference>
<dbReference type="InterPro" id="IPR001766">
    <property type="entry name" value="Fork_head_dom"/>
</dbReference>
<dbReference type="InterPro" id="IPR050211">
    <property type="entry name" value="FOX_domain-containing"/>
</dbReference>
<dbReference type="InterPro" id="IPR018122">
    <property type="entry name" value="TF_fork_head_CS_1"/>
</dbReference>
<dbReference type="InterPro" id="IPR030456">
    <property type="entry name" value="TF_fork_head_CS_2"/>
</dbReference>
<dbReference type="InterPro" id="IPR036388">
    <property type="entry name" value="WH-like_DNA-bd_sf"/>
</dbReference>
<dbReference type="InterPro" id="IPR036390">
    <property type="entry name" value="WH_DNA-bd_sf"/>
</dbReference>
<dbReference type="PANTHER" id="PTHR11829">
    <property type="entry name" value="FORKHEAD BOX PROTEIN"/>
    <property type="match status" value="1"/>
</dbReference>
<dbReference type="PANTHER" id="PTHR11829:SF204">
    <property type="entry name" value="FORKHEAD BOX PROTEIN L1"/>
    <property type="match status" value="1"/>
</dbReference>
<dbReference type="Pfam" id="PF00250">
    <property type="entry name" value="Forkhead"/>
    <property type="match status" value="1"/>
</dbReference>
<dbReference type="PRINTS" id="PR00053">
    <property type="entry name" value="FORKHEAD"/>
</dbReference>
<dbReference type="SMART" id="SM00339">
    <property type="entry name" value="FH"/>
    <property type="match status" value="1"/>
</dbReference>
<dbReference type="SUPFAM" id="SSF46785">
    <property type="entry name" value="Winged helix' DNA-binding domain"/>
    <property type="match status" value="1"/>
</dbReference>
<dbReference type="PROSITE" id="PS00657">
    <property type="entry name" value="FORK_HEAD_1"/>
    <property type="match status" value="1"/>
</dbReference>
<dbReference type="PROSITE" id="PS00658">
    <property type="entry name" value="FORK_HEAD_2"/>
    <property type="match status" value="1"/>
</dbReference>
<dbReference type="PROSITE" id="PS50039">
    <property type="entry name" value="FORK_HEAD_3"/>
    <property type="match status" value="1"/>
</dbReference>
<evidence type="ECO:0000250" key="1">
    <source>
        <dbReference type="UniProtKB" id="Q12952"/>
    </source>
</evidence>
<evidence type="ECO:0000255" key="2">
    <source>
        <dbReference type="PROSITE-ProRule" id="PRU00089"/>
    </source>
</evidence>
<evidence type="ECO:0000256" key="3">
    <source>
        <dbReference type="SAM" id="MobiDB-lite"/>
    </source>
</evidence>
<evidence type="ECO:0000269" key="4">
    <source>
    </source>
</evidence>
<evidence type="ECO:0000269" key="5">
    <source>
    </source>
</evidence>
<evidence type="ECO:0000269" key="6">
    <source>
    </source>
</evidence>
<evidence type="ECO:0000305" key="7"/>